<evidence type="ECO:0000250" key="1">
    <source>
        <dbReference type="UniProtKB" id="P04853"/>
    </source>
</evidence>
<evidence type="ECO:0000250" key="2">
    <source>
        <dbReference type="UniProtKB" id="Q91UL0"/>
    </source>
</evidence>
<evidence type="ECO:0000250" key="3">
    <source>
        <dbReference type="UniProtKB" id="Q9WAF5"/>
    </source>
</evidence>
<evidence type="ECO:0000255" key="4"/>
<evidence type="ECO:0000305" key="5"/>
<protein>
    <recommendedName>
        <fullName>Hemagglutinin-neuraminidase</fullName>
        <ecNumber evidence="3">3.2.1.18</ecNumber>
    </recommendedName>
</protein>
<accession>P12558</accession>
<dbReference type="EC" id="3.2.1.18" evidence="3"/>
<dbReference type="EMBL" id="D00243">
    <property type="protein sequence ID" value="BAA00174.1"/>
    <property type="molecule type" value="Genomic_RNA"/>
</dbReference>
<dbReference type="EMBL" id="M19478">
    <property type="protein sequence ID" value="AAA46677.1"/>
    <property type="molecule type" value="Genomic_RNA"/>
</dbReference>
<dbReference type="EMBL" id="M24707">
    <property type="protein sequence ID" value="AAA46657.1"/>
    <property type="molecule type" value="Genomic_RNA"/>
</dbReference>
<dbReference type="PIR" id="B29823">
    <property type="entry name" value="HNNZU1"/>
</dbReference>
<dbReference type="PIR" id="C46328">
    <property type="entry name" value="C46328"/>
</dbReference>
<dbReference type="PDB" id="4FZH">
    <property type="method" value="X-ray"/>
    <property type="resolution" value="3.50 A"/>
    <property type="chains" value="A/B/C/D=124-616"/>
</dbReference>
<dbReference type="PDBsum" id="4FZH"/>
<dbReference type="SMR" id="P12558"/>
<dbReference type="CAZy" id="GH83">
    <property type="family name" value="Glycoside Hydrolase Family 83"/>
</dbReference>
<dbReference type="GlyCosmos" id="P12558">
    <property type="glycosylation" value="6 sites, No reported glycans"/>
</dbReference>
<dbReference type="EvolutionaryTrace" id="P12558"/>
<dbReference type="GO" id="GO:0020002">
    <property type="term" value="C:host cell plasma membrane"/>
    <property type="evidence" value="ECO:0007669"/>
    <property type="project" value="UniProtKB-SubCell"/>
</dbReference>
<dbReference type="GO" id="GO:0016020">
    <property type="term" value="C:membrane"/>
    <property type="evidence" value="ECO:0007669"/>
    <property type="project" value="UniProtKB-KW"/>
</dbReference>
<dbReference type="GO" id="GO:0019031">
    <property type="term" value="C:viral envelope"/>
    <property type="evidence" value="ECO:0007669"/>
    <property type="project" value="UniProtKB-KW"/>
</dbReference>
<dbReference type="GO" id="GO:0055036">
    <property type="term" value="C:virion membrane"/>
    <property type="evidence" value="ECO:0007669"/>
    <property type="project" value="UniProtKB-SubCell"/>
</dbReference>
<dbReference type="GO" id="GO:0004308">
    <property type="term" value="F:exo-alpha-sialidase activity"/>
    <property type="evidence" value="ECO:0007669"/>
    <property type="project" value="UniProtKB-EC"/>
</dbReference>
<dbReference type="GO" id="GO:0046789">
    <property type="term" value="F:host cell surface receptor binding"/>
    <property type="evidence" value="ECO:0007669"/>
    <property type="project" value="InterPro"/>
</dbReference>
<dbReference type="GO" id="GO:0046718">
    <property type="term" value="P:symbiont entry into host cell"/>
    <property type="evidence" value="ECO:0007669"/>
    <property type="project" value="UniProtKB-KW"/>
</dbReference>
<dbReference type="GO" id="GO:0019062">
    <property type="term" value="P:virion attachment to host cell"/>
    <property type="evidence" value="ECO:0007669"/>
    <property type="project" value="UniProtKB-KW"/>
</dbReference>
<dbReference type="CDD" id="cd15469">
    <property type="entry name" value="HN"/>
    <property type="match status" value="1"/>
</dbReference>
<dbReference type="FunFam" id="2.120.10.10:FF:000004">
    <property type="entry name" value="Hemagglutinin-neuraminidase"/>
    <property type="match status" value="1"/>
</dbReference>
<dbReference type="Gene3D" id="2.120.10.10">
    <property type="match status" value="1"/>
</dbReference>
<dbReference type="InterPro" id="IPR016285">
    <property type="entry name" value="Hemagglutn-neuramid"/>
</dbReference>
<dbReference type="InterPro" id="IPR000665">
    <property type="entry name" value="Hemagglutn/HN"/>
</dbReference>
<dbReference type="InterPro" id="IPR036278">
    <property type="entry name" value="Sialidase_sf"/>
</dbReference>
<dbReference type="Pfam" id="PF00423">
    <property type="entry name" value="HN"/>
    <property type="match status" value="1"/>
</dbReference>
<dbReference type="PIRSF" id="PIRSF001072">
    <property type="entry name" value="Hemagglut-neuramid_paramyxoV"/>
    <property type="match status" value="1"/>
</dbReference>
<dbReference type="SUPFAM" id="SSF50939">
    <property type="entry name" value="Sialidases"/>
    <property type="match status" value="1"/>
</dbReference>
<reference key="1">
    <citation type="journal article" date="1988" name="J. Gen. Virol.">
        <title>Nucleotide sequence of the fusion and haemagglutinin-neuraminidase glycoprotein genes of Newcastle disease virus, strain Ulster: molecular basis for variations in pathogenicity between strains.</title>
        <authorList>
            <person name="Millar N.S."/>
            <person name="Chambers P."/>
            <person name="Emmerson P.T."/>
        </authorList>
    </citation>
    <scope>NUCLEOTIDE SEQUENCE [GENOMIC RNA]</scope>
</reference>
<reference key="2">
    <citation type="journal article" date="1988" name="Virology">
        <title>Structural features unique to each of the three antigenic sites on the hemagglutinin-neuraminidase protein of Newcastle disease virus.</title>
        <authorList>
            <person name="Gotoh B."/>
            <person name="Sakaguchi T."/>
            <person name="Nishikawa K."/>
            <person name="Inocencio N.M."/>
            <person name="Hamaguchi M."/>
            <person name="Toyoda T."/>
            <person name="Nagai Y."/>
        </authorList>
    </citation>
    <scope>NUCLEOTIDE SEQUENCE [GENOMIC RNA]</scope>
</reference>
<reference key="3">
    <citation type="journal article" date="1989" name="Virology">
        <title>Newcastle disease virus evolution. I. Multiple lineages defined by sequence variability of the hemagglutinin-neuraminidase gene.</title>
        <authorList>
            <person name="Sakaguchi T."/>
            <person name="Toyoda T."/>
            <person name="Gotoh B."/>
            <person name="Inocencio N.M."/>
            <person name="Kuma K."/>
            <person name="Miyata T."/>
            <person name="Nagai Y."/>
        </authorList>
    </citation>
    <scope>NUCLEOTIDE SEQUENCE [GENOMIC RNA]</scope>
</reference>
<feature type="chain" id="PRO_0000142618" description="Hemagglutinin-neuraminidase">
    <location>
        <begin position="1"/>
        <end position="616"/>
    </location>
</feature>
<feature type="topological domain" description="Intravirion" evidence="4">
    <location>
        <begin position="1"/>
        <end position="26"/>
    </location>
</feature>
<feature type="transmembrane region" description="Helical" evidence="4">
    <location>
        <begin position="27"/>
        <end position="47"/>
    </location>
</feature>
<feature type="topological domain" description="Virion surface" evidence="4">
    <location>
        <begin position="48"/>
        <end position="616"/>
    </location>
</feature>
<feature type="region of interest" description="Important for interaction with fusion/F protein" evidence="2">
    <location>
        <begin position="124"/>
        <end position="152"/>
    </location>
</feature>
<feature type="region of interest" description="Involved in neuraminidase activity" evidence="2">
    <location>
        <begin position="234"/>
        <end position="239"/>
    </location>
</feature>
<feature type="glycosylation site" description="N-linked (GlcNAc...) asparagine; by host" evidence="4">
    <location>
        <position position="119"/>
    </location>
</feature>
<feature type="glycosylation site" description="N-linked (GlcNAc...) asparagine; by host" evidence="2">
    <location>
        <position position="341"/>
    </location>
</feature>
<feature type="glycosylation site" description="N-linked (GlcNAc...) asparagine; by host" evidence="2">
    <location>
        <position position="433"/>
    </location>
</feature>
<feature type="glycosylation site" description="N-linked (GlcNAc...) asparagine; by host" evidence="2">
    <location>
        <position position="481"/>
    </location>
</feature>
<feature type="glycosylation site" description="N-linked (GlcNAc...) asparagine; by host" evidence="4">
    <location>
        <position position="538"/>
    </location>
</feature>
<feature type="glycosylation site" description="N-linked (GlcNAc...) asparagine; by host" evidence="4">
    <location>
        <position position="600"/>
    </location>
</feature>
<feature type="disulfide bond" evidence="3">
    <location>
        <begin position="172"/>
        <end position="196"/>
    </location>
</feature>
<feature type="disulfide bond" evidence="3">
    <location>
        <begin position="186"/>
        <end position="247"/>
    </location>
</feature>
<feature type="disulfide bond" evidence="3">
    <location>
        <begin position="238"/>
        <end position="251"/>
    </location>
</feature>
<feature type="disulfide bond" evidence="3">
    <location>
        <begin position="344"/>
        <end position="461"/>
    </location>
</feature>
<feature type="disulfide bond" evidence="3">
    <location>
        <begin position="455"/>
        <end position="465"/>
    </location>
</feature>
<feature type="disulfide bond" evidence="3">
    <location>
        <begin position="531"/>
        <end position="542"/>
    </location>
</feature>
<feature type="sequence variant">
    <original>L</original>
    <variation>H</variation>
    <location>
        <position position="74"/>
    </location>
</feature>
<feature type="sequence variant">
    <original>L</original>
    <variation>S</variation>
    <location>
        <position position="74"/>
    </location>
</feature>
<feature type="sequence variant">
    <original>E</original>
    <variation>K</variation>
    <location>
        <position position="259"/>
    </location>
</feature>
<feature type="sequence variant">
    <original>L</original>
    <variation>R</variation>
    <location>
        <position position="438"/>
    </location>
</feature>
<feature type="sequence variant">
    <original>K</original>
    <variation>E</variation>
    <location>
        <position position="495"/>
    </location>
</feature>
<feature type="sequence variant">
    <original>EF</original>
    <variation>GI</variation>
    <location>
        <begin position="555"/>
        <end position="556"/>
    </location>
</feature>
<name>HN_NDVU</name>
<sequence>MDRAVSQVALENDEREAKNTWRLVFRIAILLLTVVTLAISAAALAYSMEASTPSDLIGIPTAISRAEEKITSALGSNQDVVDRIYKQVALESPLALLNTESTIMNAITSLSYQINGAANSSGCGAPIHDPDYIGGIGKELIVDDASDVTSFYPSAFQEHLNFIPAPTTGSGCTRIPSFDMSATHYCYTHNVILSGCRDHSHSHQYLALGVLRTSATGRVFFSTLHSINLDDTQNRKSCSVSATPLGCDMLCSKVTETEEEDYNSAVPTSMVHGRLGFDGQYHEKDLDVTTLFEDWVANYPGVGGGSFIDNRVWFPVYGGLKPNSPSDTAQEGKYVIYKRYNDTCPDEQDYQIRMAKSSYKPGRFGGKRVQQAILSIKVSTSLGEDPVLTVPPNTVTLMGAEGRVLTVGTSHFLYQRGSSYFSPALLYPMTVSNKTATLHSPYTFDAFTRPGSVPCQASARCPNSCVTGVYTDPYPLVFYRNHTLRGVFGTMLDDKQARLNPVSAVFDSISRSRITRVSSSSTKAAYTTSTCFKVVKTNKTYCLSIAEISNTLFGEFRIVPLLVEILKDDGVREARAGRLSQLREGWKDDIVSPIFCDAKNQTEYRRELESYAASWP</sequence>
<organism>
    <name type="scientific">Newcastle disease virus (strain Chicken/Northern Ireland/Ulster/67)</name>
    <name type="common">NDV</name>
    <dbReference type="NCBI Taxonomy" id="11190"/>
    <lineage>
        <taxon>Viruses</taxon>
        <taxon>Riboviria</taxon>
        <taxon>Orthornavirae</taxon>
        <taxon>Negarnaviricota</taxon>
        <taxon>Haploviricotina</taxon>
        <taxon>Monjiviricetes</taxon>
        <taxon>Mononegavirales</taxon>
        <taxon>Paramyxoviridae</taxon>
        <taxon>Avulavirinae</taxon>
        <taxon>Orthoavulavirus</taxon>
        <taxon>Orthoavulavirus javaense</taxon>
        <taxon>Avian paramyxovirus 1</taxon>
    </lineage>
</organism>
<gene>
    <name type="primary">HN</name>
</gene>
<comment type="function">
    <text evidence="2">Mediates the viral entry into the host cell together with fusion/F protein. Attaches the virus to sialic acid-containing cell receptors and thereby initiates infection. Binding of HN protein to the receptor induces a conformational change that allows the F protein to trigger virion/cell membranes fusion.</text>
</comment>
<comment type="function">
    <text evidence="2">Neuraminidase activity ensures the efficient spread of the virus by dissociating the mature virions from the neuraminic acid containing glycoproteins.</text>
</comment>
<comment type="catalytic activity">
    <reaction evidence="2">
        <text>Hydrolysis of alpha-(2-&gt;3)-, alpha-(2-&gt;6)-, alpha-(2-&gt;8)- glycosidic linkages of terminal sialic acid residues in oligosaccharides, glycoproteins, glycolipids, colominic acid and synthetic substrates.</text>
        <dbReference type="EC" id="3.2.1.18"/>
    </reaction>
</comment>
<comment type="subunit">
    <text evidence="1 2 3">Homotetramer; composed of disulfide-linked homodimers (By similarity). Interacts with F protein trimer (By similarity). Interacts with host CG-1B; this interaction inhibits viral adsorption and replication rather than internalization (By similarity).</text>
</comment>
<comment type="subcellular location">
    <subcellularLocation>
        <location evidence="2">Virion membrane</location>
        <topology evidence="2">Single-pass type II membrane protein</topology>
    </subcellularLocation>
    <subcellularLocation>
        <location evidence="2">Host cell membrane</location>
        <topology evidence="2">Single-pass type II membrane protein</topology>
    </subcellularLocation>
</comment>
<comment type="domain">
    <text evidence="3">The C-terminus (head domain) is involved in binding the cellular receptor.</text>
</comment>
<comment type="similarity">
    <text evidence="5">Belongs to the paramyxoviruses hemagglutinin-neuraminidase family.</text>
</comment>
<keyword id="KW-0002">3D-structure</keyword>
<keyword id="KW-1015">Disulfide bond</keyword>
<keyword id="KW-0325">Glycoprotein</keyword>
<keyword id="KW-0348">Hemagglutinin</keyword>
<keyword id="KW-1032">Host cell membrane</keyword>
<keyword id="KW-1043">Host membrane</keyword>
<keyword id="KW-0945">Host-virus interaction</keyword>
<keyword id="KW-0378">Hydrolase</keyword>
<keyword id="KW-0472">Membrane</keyword>
<keyword id="KW-0735">Signal-anchor</keyword>
<keyword id="KW-0812">Transmembrane</keyword>
<keyword id="KW-1133">Transmembrane helix</keyword>
<keyword id="KW-1161">Viral attachment to host cell</keyword>
<keyword id="KW-0261">Viral envelope protein</keyword>
<keyword id="KW-0946">Virion</keyword>
<keyword id="KW-1160">Virus entry into host cell</keyword>
<organismHost>
    <name type="scientific">Gallus gallus</name>
    <name type="common">Chicken</name>
    <dbReference type="NCBI Taxonomy" id="9031"/>
</organismHost>
<proteinExistence type="evidence at protein level"/>